<gene>
    <name evidence="1" type="primary">rph</name>
    <name type="ordered locus">HAPS_1298</name>
</gene>
<keyword id="KW-0548">Nucleotidyltransferase</keyword>
<keyword id="KW-1185">Reference proteome</keyword>
<keyword id="KW-0694">RNA-binding</keyword>
<keyword id="KW-0698">rRNA processing</keyword>
<keyword id="KW-0808">Transferase</keyword>
<keyword id="KW-0819">tRNA processing</keyword>
<keyword id="KW-0820">tRNA-binding</keyword>
<proteinExistence type="inferred from homology"/>
<dbReference type="EC" id="2.7.7.56" evidence="1"/>
<dbReference type="EMBL" id="CP001321">
    <property type="protein sequence ID" value="ACL32890.1"/>
    <property type="molecule type" value="Genomic_DNA"/>
</dbReference>
<dbReference type="RefSeq" id="WP_010786104.1">
    <property type="nucleotide sequence ID" value="NC_011852.1"/>
</dbReference>
<dbReference type="SMR" id="B8F6D8"/>
<dbReference type="STRING" id="557723.HAPS_1298"/>
<dbReference type="KEGG" id="hap:HAPS_1298"/>
<dbReference type="HOGENOM" id="CLU_050858_0_0_6"/>
<dbReference type="Proteomes" id="UP000006743">
    <property type="component" value="Chromosome"/>
</dbReference>
<dbReference type="GO" id="GO:0000175">
    <property type="term" value="F:3'-5'-RNA exonuclease activity"/>
    <property type="evidence" value="ECO:0007669"/>
    <property type="project" value="UniProtKB-UniRule"/>
</dbReference>
<dbReference type="GO" id="GO:0000049">
    <property type="term" value="F:tRNA binding"/>
    <property type="evidence" value="ECO:0007669"/>
    <property type="project" value="UniProtKB-UniRule"/>
</dbReference>
<dbReference type="GO" id="GO:0009022">
    <property type="term" value="F:tRNA nucleotidyltransferase activity"/>
    <property type="evidence" value="ECO:0007669"/>
    <property type="project" value="UniProtKB-UniRule"/>
</dbReference>
<dbReference type="GO" id="GO:0016075">
    <property type="term" value="P:rRNA catabolic process"/>
    <property type="evidence" value="ECO:0007669"/>
    <property type="project" value="UniProtKB-UniRule"/>
</dbReference>
<dbReference type="GO" id="GO:0006364">
    <property type="term" value="P:rRNA processing"/>
    <property type="evidence" value="ECO:0007669"/>
    <property type="project" value="UniProtKB-KW"/>
</dbReference>
<dbReference type="GO" id="GO:0008033">
    <property type="term" value="P:tRNA processing"/>
    <property type="evidence" value="ECO:0007669"/>
    <property type="project" value="UniProtKB-UniRule"/>
</dbReference>
<dbReference type="CDD" id="cd11362">
    <property type="entry name" value="RNase_PH_bact"/>
    <property type="match status" value="1"/>
</dbReference>
<dbReference type="FunFam" id="3.30.230.70:FF:000003">
    <property type="entry name" value="Ribonuclease PH"/>
    <property type="match status" value="1"/>
</dbReference>
<dbReference type="Gene3D" id="3.30.230.70">
    <property type="entry name" value="GHMP Kinase, N-terminal domain"/>
    <property type="match status" value="1"/>
</dbReference>
<dbReference type="HAMAP" id="MF_00564">
    <property type="entry name" value="RNase_PH"/>
    <property type="match status" value="1"/>
</dbReference>
<dbReference type="InterPro" id="IPR001247">
    <property type="entry name" value="ExoRNase_PH_dom1"/>
</dbReference>
<dbReference type="InterPro" id="IPR015847">
    <property type="entry name" value="ExoRNase_PH_dom2"/>
</dbReference>
<dbReference type="InterPro" id="IPR036345">
    <property type="entry name" value="ExoRNase_PH_dom2_sf"/>
</dbReference>
<dbReference type="InterPro" id="IPR027408">
    <property type="entry name" value="PNPase/RNase_PH_dom_sf"/>
</dbReference>
<dbReference type="InterPro" id="IPR020568">
    <property type="entry name" value="Ribosomal_Su5_D2-typ_SF"/>
</dbReference>
<dbReference type="InterPro" id="IPR050080">
    <property type="entry name" value="RNase_PH"/>
</dbReference>
<dbReference type="InterPro" id="IPR002381">
    <property type="entry name" value="RNase_PH_bac-type"/>
</dbReference>
<dbReference type="InterPro" id="IPR018336">
    <property type="entry name" value="RNase_PH_CS"/>
</dbReference>
<dbReference type="NCBIfam" id="TIGR01966">
    <property type="entry name" value="RNasePH"/>
    <property type="match status" value="1"/>
</dbReference>
<dbReference type="PANTHER" id="PTHR11953">
    <property type="entry name" value="EXOSOME COMPLEX COMPONENT"/>
    <property type="match status" value="1"/>
</dbReference>
<dbReference type="PANTHER" id="PTHR11953:SF0">
    <property type="entry name" value="EXOSOME COMPLEX COMPONENT RRP41"/>
    <property type="match status" value="1"/>
</dbReference>
<dbReference type="Pfam" id="PF01138">
    <property type="entry name" value="RNase_PH"/>
    <property type="match status" value="1"/>
</dbReference>
<dbReference type="Pfam" id="PF03725">
    <property type="entry name" value="RNase_PH_C"/>
    <property type="match status" value="1"/>
</dbReference>
<dbReference type="SUPFAM" id="SSF55666">
    <property type="entry name" value="Ribonuclease PH domain 2-like"/>
    <property type="match status" value="1"/>
</dbReference>
<dbReference type="SUPFAM" id="SSF54211">
    <property type="entry name" value="Ribosomal protein S5 domain 2-like"/>
    <property type="match status" value="1"/>
</dbReference>
<dbReference type="PROSITE" id="PS01277">
    <property type="entry name" value="RIBONUCLEASE_PH"/>
    <property type="match status" value="1"/>
</dbReference>
<evidence type="ECO:0000255" key="1">
    <source>
        <dbReference type="HAMAP-Rule" id="MF_00564"/>
    </source>
</evidence>
<accession>B8F6D8</accession>
<reference key="1">
    <citation type="journal article" date="2009" name="J. Bacteriol.">
        <title>Complete genome sequence of Haemophilus parasuis SH0165.</title>
        <authorList>
            <person name="Yue M."/>
            <person name="Yang F."/>
            <person name="Yang J."/>
            <person name="Bei W."/>
            <person name="Cai X."/>
            <person name="Chen L."/>
            <person name="Dong J."/>
            <person name="Zhou R."/>
            <person name="Jin M."/>
            <person name="Jin Q."/>
            <person name="Chen H."/>
        </authorList>
    </citation>
    <scope>NUCLEOTIDE SEQUENCE [LARGE SCALE GENOMIC DNA]</scope>
    <source>
        <strain>SH0165</strain>
    </source>
</reference>
<organism>
    <name type="scientific">Glaesserella parasuis serovar 5 (strain SH0165)</name>
    <name type="common">Haemophilus parasuis</name>
    <dbReference type="NCBI Taxonomy" id="557723"/>
    <lineage>
        <taxon>Bacteria</taxon>
        <taxon>Pseudomonadati</taxon>
        <taxon>Pseudomonadota</taxon>
        <taxon>Gammaproteobacteria</taxon>
        <taxon>Pasteurellales</taxon>
        <taxon>Pasteurellaceae</taxon>
        <taxon>Glaesserella</taxon>
    </lineage>
</organism>
<comment type="function">
    <text evidence="1">Phosphorolytic 3'-5' exoribonuclease that plays an important role in tRNA 3'-end maturation. Removes nucleotide residues following the 3'-CCA terminus of tRNAs; can also add nucleotides to the ends of RNA molecules by using nucleoside diphosphates as substrates, but this may not be physiologically important. Probably plays a role in initiation of 16S rRNA degradation (leading to ribosome degradation) during starvation.</text>
</comment>
<comment type="catalytic activity">
    <reaction evidence="1">
        <text>tRNA(n+1) + phosphate = tRNA(n) + a ribonucleoside 5'-diphosphate</text>
        <dbReference type="Rhea" id="RHEA:10628"/>
        <dbReference type="Rhea" id="RHEA-COMP:17343"/>
        <dbReference type="Rhea" id="RHEA-COMP:17344"/>
        <dbReference type="ChEBI" id="CHEBI:43474"/>
        <dbReference type="ChEBI" id="CHEBI:57930"/>
        <dbReference type="ChEBI" id="CHEBI:173114"/>
        <dbReference type="EC" id="2.7.7.56"/>
    </reaction>
</comment>
<comment type="subunit">
    <text evidence="1">Homohexameric ring arranged as a trimer of dimers.</text>
</comment>
<comment type="similarity">
    <text evidence="1">Belongs to the RNase PH family.</text>
</comment>
<name>RNPH_GLAP5</name>
<sequence length="244" mass="26665">MRPNNRPVDQTRPVKITRNYTRYAEGSVLVEFGETKVLCNATVEETVPRFLKGQQQGWVTAEYGMLPRATHSRTQREAAKGKQGGRTMEIQRLIARSLRAVVDLKALGERTITVDCDVIQADGGTRTASITGACVALHDAINKLIADGLLKENPMKGLVAAISVGIVDGQAVCDLEYVEDSNAETDMNVVMVEDGRLVEVQGTAEGEPFSHMELLQLLDLAQKGIEQLFEAQRQALNATSDAIR</sequence>
<feature type="chain" id="PRO_1000146776" description="Ribonuclease PH">
    <location>
        <begin position="1"/>
        <end position="244"/>
    </location>
</feature>
<feature type="binding site" evidence="1">
    <location>
        <position position="86"/>
    </location>
    <ligand>
        <name>phosphate</name>
        <dbReference type="ChEBI" id="CHEBI:43474"/>
        <note>substrate</note>
    </ligand>
</feature>
<feature type="binding site" evidence="1">
    <location>
        <begin position="124"/>
        <end position="126"/>
    </location>
    <ligand>
        <name>phosphate</name>
        <dbReference type="ChEBI" id="CHEBI:43474"/>
        <note>substrate</note>
    </ligand>
</feature>
<protein>
    <recommendedName>
        <fullName evidence="1">Ribonuclease PH</fullName>
        <shortName evidence="1">RNase PH</shortName>
        <ecNumber evidence="1">2.7.7.56</ecNumber>
    </recommendedName>
    <alternativeName>
        <fullName evidence="1">tRNA nucleotidyltransferase</fullName>
    </alternativeName>
</protein>